<accession>Q83GT2</accession>
<feature type="chain" id="PRO_0000177602" description="Translation initiation factor IF-3">
    <location>
        <begin position="1"/>
        <end position="182"/>
    </location>
</feature>
<protein>
    <recommendedName>
        <fullName evidence="1">Translation initiation factor IF-3</fullName>
    </recommendedName>
</protein>
<dbReference type="EMBL" id="AE014184">
    <property type="protein sequence ID" value="AAO44261.1"/>
    <property type="molecule type" value="Genomic_DNA"/>
</dbReference>
<dbReference type="RefSeq" id="WP_011096553.1">
    <property type="nucleotide sequence ID" value="NC_004572.3"/>
</dbReference>
<dbReference type="SMR" id="Q83GT2"/>
<dbReference type="STRING" id="203267.TWT_164"/>
<dbReference type="GeneID" id="67388390"/>
<dbReference type="KEGG" id="twh:TWT_164"/>
<dbReference type="eggNOG" id="COG0290">
    <property type="taxonomic scope" value="Bacteria"/>
</dbReference>
<dbReference type="HOGENOM" id="CLU_054919_3_2_11"/>
<dbReference type="OrthoDB" id="9806014at2"/>
<dbReference type="Proteomes" id="UP000002200">
    <property type="component" value="Chromosome"/>
</dbReference>
<dbReference type="GO" id="GO:0005829">
    <property type="term" value="C:cytosol"/>
    <property type="evidence" value="ECO:0007669"/>
    <property type="project" value="TreeGrafter"/>
</dbReference>
<dbReference type="GO" id="GO:0016020">
    <property type="term" value="C:membrane"/>
    <property type="evidence" value="ECO:0007669"/>
    <property type="project" value="TreeGrafter"/>
</dbReference>
<dbReference type="GO" id="GO:0043022">
    <property type="term" value="F:ribosome binding"/>
    <property type="evidence" value="ECO:0007669"/>
    <property type="project" value="TreeGrafter"/>
</dbReference>
<dbReference type="GO" id="GO:0003743">
    <property type="term" value="F:translation initiation factor activity"/>
    <property type="evidence" value="ECO:0007669"/>
    <property type="project" value="UniProtKB-UniRule"/>
</dbReference>
<dbReference type="GO" id="GO:0032790">
    <property type="term" value="P:ribosome disassembly"/>
    <property type="evidence" value="ECO:0007669"/>
    <property type="project" value="TreeGrafter"/>
</dbReference>
<dbReference type="FunFam" id="3.30.110.10:FF:000001">
    <property type="entry name" value="Translation initiation factor IF-3"/>
    <property type="match status" value="1"/>
</dbReference>
<dbReference type="Gene3D" id="3.30.110.10">
    <property type="entry name" value="Translation initiation factor 3 (IF-3), C-terminal domain"/>
    <property type="match status" value="1"/>
</dbReference>
<dbReference type="Gene3D" id="3.10.20.80">
    <property type="entry name" value="Translation initiation factor 3 (IF-3), N-terminal domain"/>
    <property type="match status" value="1"/>
</dbReference>
<dbReference type="HAMAP" id="MF_00080">
    <property type="entry name" value="IF_3"/>
    <property type="match status" value="1"/>
</dbReference>
<dbReference type="InterPro" id="IPR036788">
    <property type="entry name" value="T_IF-3_C_sf"/>
</dbReference>
<dbReference type="InterPro" id="IPR036787">
    <property type="entry name" value="T_IF-3_N_sf"/>
</dbReference>
<dbReference type="InterPro" id="IPR019813">
    <property type="entry name" value="Translation_initiation_fac3_CS"/>
</dbReference>
<dbReference type="InterPro" id="IPR001288">
    <property type="entry name" value="Translation_initiation_fac_3"/>
</dbReference>
<dbReference type="InterPro" id="IPR019815">
    <property type="entry name" value="Translation_initiation_fac_3_C"/>
</dbReference>
<dbReference type="InterPro" id="IPR019814">
    <property type="entry name" value="Translation_initiation_fac_3_N"/>
</dbReference>
<dbReference type="NCBIfam" id="TIGR00168">
    <property type="entry name" value="infC"/>
    <property type="match status" value="1"/>
</dbReference>
<dbReference type="PANTHER" id="PTHR10938">
    <property type="entry name" value="TRANSLATION INITIATION FACTOR IF-3"/>
    <property type="match status" value="1"/>
</dbReference>
<dbReference type="PANTHER" id="PTHR10938:SF0">
    <property type="entry name" value="TRANSLATION INITIATION FACTOR IF-3, MITOCHONDRIAL"/>
    <property type="match status" value="1"/>
</dbReference>
<dbReference type="Pfam" id="PF00707">
    <property type="entry name" value="IF3_C"/>
    <property type="match status" value="1"/>
</dbReference>
<dbReference type="Pfam" id="PF05198">
    <property type="entry name" value="IF3_N"/>
    <property type="match status" value="1"/>
</dbReference>
<dbReference type="SUPFAM" id="SSF55200">
    <property type="entry name" value="Translation initiation factor IF3, C-terminal domain"/>
    <property type="match status" value="1"/>
</dbReference>
<dbReference type="SUPFAM" id="SSF54364">
    <property type="entry name" value="Translation initiation factor IF3, N-terminal domain"/>
    <property type="match status" value="1"/>
</dbReference>
<dbReference type="PROSITE" id="PS00938">
    <property type="entry name" value="IF3"/>
    <property type="match status" value="1"/>
</dbReference>
<reference key="1">
    <citation type="journal article" date="2003" name="Genome Res.">
        <title>Tropheryma whipplei twist: a human pathogenic Actinobacteria with a reduced genome.</title>
        <authorList>
            <person name="Raoult D."/>
            <person name="Ogata H."/>
            <person name="Audic S."/>
            <person name="Robert C."/>
            <person name="Suhre K."/>
            <person name="Drancourt M."/>
            <person name="Claverie J.-M."/>
        </authorList>
    </citation>
    <scope>NUCLEOTIDE SEQUENCE [LARGE SCALE GENOMIC DNA]</scope>
    <source>
        <strain>Twist</strain>
    </source>
</reference>
<name>IF3_TROWT</name>
<evidence type="ECO:0000255" key="1">
    <source>
        <dbReference type="HAMAP-Rule" id="MF_00080"/>
    </source>
</evidence>
<keyword id="KW-0963">Cytoplasm</keyword>
<keyword id="KW-0396">Initiation factor</keyword>
<keyword id="KW-0648">Protein biosynthesis</keyword>
<keyword id="KW-1185">Reference proteome</keyword>
<comment type="function">
    <text evidence="1">IF-3 binds to the 30S ribosomal subunit and shifts the equilibrium between 70S ribosomes and their 50S and 30S subunits in favor of the free subunits, thus enhancing the availability of 30S subunits on which protein synthesis initiation begins.</text>
</comment>
<comment type="subunit">
    <text evidence="1">Monomer.</text>
</comment>
<comment type="subcellular location">
    <subcellularLocation>
        <location evidence="1">Cytoplasm</location>
    </subcellularLocation>
</comment>
<comment type="similarity">
    <text evidence="1">Belongs to the IF-3 family.</text>
</comment>
<gene>
    <name evidence="1" type="primary">infC</name>
    <name type="ordered locus">TWT_164</name>
</gene>
<organism>
    <name type="scientific">Tropheryma whipplei (strain Twist)</name>
    <name type="common">Whipple's bacillus</name>
    <dbReference type="NCBI Taxonomy" id="203267"/>
    <lineage>
        <taxon>Bacteria</taxon>
        <taxon>Bacillati</taxon>
        <taxon>Actinomycetota</taxon>
        <taxon>Actinomycetes</taxon>
        <taxon>Micrococcales</taxon>
        <taxon>Tropherymataceae</taxon>
        <taxon>Tropheryma</taxon>
    </lineage>
</organism>
<proteinExistence type="inferred from homology"/>
<sequence length="182" mass="20110">MGESITAPEVRLINSDGGPLGVVSRSVALRLAGEVGLDLVEVSPFSKPPVVKIMDYGKFRYEASQKAKEARRRQSGVSVKEVRFRLKICDNDYDVKLRKAISFLQAGDKVKVMILFRGREQSRPELGVKLLKKFADDISEFGSADSLSRTDGRGMAIMVSPIKSKTIVREKSSHAQKGDKQP</sequence>